<organism>
    <name type="scientific">Manihot esculenta</name>
    <name type="common">Cassava</name>
    <name type="synonym">Jatropha manihot</name>
    <dbReference type="NCBI Taxonomy" id="3983"/>
    <lineage>
        <taxon>Eukaryota</taxon>
        <taxon>Viridiplantae</taxon>
        <taxon>Streptophyta</taxon>
        <taxon>Embryophyta</taxon>
        <taxon>Tracheophyta</taxon>
        <taxon>Spermatophyta</taxon>
        <taxon>Magnoliopsida</taxon>
        <taxon>eudicotyledons</taxon>
        <taxon>Gunneridae</taxon>
        <taxon>Pentapetalae</taxon>
        <taxon>rosids</taxon>
        <taxon>fabids</taxon>
        <taxon>Malpighiales</taxon>
        <taxon>Euphorbiaceae</taxon>
        <taxon>Crotonoideae</taxon>
        <taxon>Manihoteae</taxon>
        <taxon>Manihot</taxon>
    </lineage>
</organism>
<evidence type="ECO:0000250" key="1"/>
<evidence type="ECO:0000255" key="2">
    <source>
        <dbReference type="HAMAP-Rule" id="MF_00610"/>
    </source>
</evidence>
<proteinExistence type="inferred from homology"/>
<accession>B1NWG3</accession>
<feature type="signal peptide" evidence="2">
    <location>
        <begin position="1"/>
        <end position="35"/>
    </location>
</feature>
<feature type="chain" id="PRO_0000342072" description="Cytochrome f">
    <location>
        <begin position="36"/>
        <end position="320"/>
    </location>
</feature>
<feature type="transmembrane region" description="Helical" evidence="2">
    <location>
        <begin position="286"/>
        <end position="306"/>
    </location>
</feature>
<feature type="binding site" description="axial binding residue" evidence="2">
    <location>
        <position position="36"/>
    </location>
    <ligand>
        <name>heme</name>
        <dbReference type="ChEBI" id="CHEBI:30413"/>
    </ligand>
    <ligandPart>
        <name>Fe</name>
        <dbReference type="ChEBI" id="CHEBI:18248"/>
    </ligandPart>
</feature>
<feature type="binding site" description="covalent" evidence="2">
    <location>
        <position position="56"/>
    </location>
    <ligand>
        <name>heme</name>
        <dbReference type="ChEBI" id="CHEBI:30413"/>
    </ligand>
</feature>
<feature type="binding site" description="covalent" evidence="2">
    <location>
        <position position="59"/>
    </location>
    <ligand>
        <name>heme</name>
        <dbReference type="ChEBI" id="CHEBI:30413"/>
    </ligand>
</feature>
<feature type="binding site" description="axial binding residue" evidence="2">
    <location>
        <position position="60"/>
    </location>
    <ligand>
        <name>heme</name>
        <dbReference type="ChEBI" id="CHEBI:30413"/>
    </ligand>
    <ligandPart>
        <name>Fe</name>
        <dbReference type="ChEBI" id="CHEBI:18248"/>
    </ligandPart>
</feature>
<comment type="function">
    <text evidence="2">Component of the cytochrome b6-f complex, which mediates electron transfer between photosystem II (PSII) and photosystem I (PSI), cyclic electron flow around PSI, and state transitions.</text>
</comment>
<comment type="cofactor">
    <cofactor evidence="2">
        <name>heme</name>
        <dbReference type="ChEBI" id="CHEBI:30413"/>
    </cofactor>
    <text evidence="2">Binds 1 heme group covalently.</text>
</comment>
<comment type="subunit">
    <text evidence="1">The 4 large subunits of the cytochrome b6-f complex are cytochrome b6, subunit IV (17 kDa polypeptide, petD), cytochrome f and the Rieske protein, while the 4 small subunits are PetG, PetL, PetM and PetN. The complex functions as a dimer (By similarity).</text>
</comment>
<comment type="subcellular location">
    <subcellularLocation>
        <location evidence="2">Plastid</location>
        <location evidence="2">Chloroplast thylakoid membrane</location>
        <topology evidence="2">Single-pass membrane protein</topology>
    </subcellularLocation>
</comment>
<comment type="similarity">
    <text evidence="2">Belongs to the cytochrome f family.</text>
</comment>
<name>CYF_MANES</name>
<dbReference type="EMBL" id="EU117376">
    <property type="protein sequence ID" value="ABV66167.1"/>
    <property type="molecule type" value="Genomic_DNA"/>
</dbReference>
<dbReference type="RefSeq" id="YP_001718450.1">
    <property type="nucleotide sequence ID" value="NC_010433.1"/>
</dbReference>
<dbReference type="SMR" id="B1NWG3"/>
<dbReference type="GeneID" id="5999988"/>
<dbReference type="KEGG" id="mesc:5999988"/>
<dbReference type="OrthoDB" id="811244at2759"/>
<dbReference type="GO" id="GO:0009535">
    <property type="term" value="C:chloroplast thylakoid membrane"/>
    <property type="evidence" value="ECO:0007669"/>
    <property type="project" value="UniProtKB-SubCell"/>
</dbReference>
<dbReference type="GO" id="GO:0009055">
    <property type="term" value="F:electron transfer activity"/>
    <property type="evidence" value="ECO:0007669"/>
    <property type="project" value="UniProtKB-UniRule"/>
</dbReference>
<dbReference type="GO" id="GO:0020037">
    <property type="term" value="F:heme binding"/>
    <property type="evidence" value="ECO:0007669"/>
    <property type="project" value="InterPro"/>
</dbReference>
<dbReference type="GO" id="GO:0005506">
    <property type="term" value="F:iron ion binding"/>
    <property type="evidence" value="ECO:0007669"/>
    <property type="project" value="InterPro"/>
</dbReference>
<dbReference type="GO" id="GO:0015979">
    <property type="term" value="P:photosynthesis"/>
    <property type="evidence" value="ECO:0007669"/>
    <property type="project" value="UniProtKB-UniRule"/>
</dbReference>
<dbReference type="FunFam" id="1.20.5.700:FF:000001">
    <property type="entry name" value="Cytochrome f"/>
    <property type="match status" value="1"/>
</dbReference>
<dbReference type="FunFam" id="2.40.50.100:FF:000007">
    <property type="entry name" value="Cytochrome f"/>
    <property type="match status" value="1"/>
</dbReference>
<dbReference type="FunFam" id="2.60.40.830:FF:000001">
    <property type="entry name" value="Cytochrome f"/>
    <property type="match status" value="1"/>
</dbReference>
<dbReference type="Gene3D" id="2.40.50.100">
    <property type="match status" value="1"/>
</dbReference>
<dbReference type="Gene3D" id="2.60.40.830">
    <property type="entry name" value="Cytochrome f large domain"/>
    <property type="match status" value="1"/>
</dbReference>
<dbReference type="Gene3D" id="1.20.5.700">
    <property type="entry name" value="Single helix bin"/>
    <property type="match status" value="1"/>
</dbReference>
<dbReference type="HAMAP" id="MF_00610">
    <property type="entry name" value="Cytb6_f_cytF"/>
    <property type="match status" value="1"/>
</dbReference>
<dbReference type="InterPro" id="IPR024058">
    <property type="entry name" value="Cyt-f_TM"/>
</dbReference>
<dbReference type="InterPro" id="IPR002325">
    <property type="entry name" value="Cyt_f"/>
</dbReference>
<dbReference type="InterPro" id="IPR024094">
    <property type="entry name" value="Cyt_f_lg_dom"/>
</dbReference>
<dbReference type="InterPro" id="IPR036826">
    <property type="entry name" value="Cyt_f_lg_dom_sf"/>
</dbReference>
<dbReference type="InterPro" id="IPR011054">
    <property type="entry name" value="Rudment_hybrid_motif"/>
</dbReference>
<dbReference type="PANTHER" id="PTHR33288">
    <property type="match status" value="1"/>
</dbReference>
<dbReference type="PANTHER" id="PTHR33288:SF10">
    <property type="entry name" value="CYTOCHROME F"/>
    <property type="match status" value="1"/>
</dbReference>
<dbReference type="Pfam" id="PF01333">
    <property type="entry name" value="Apocytochr_F_C"/>
    <property type="match status" value="1"/>
</dbReference>
<dbReference type="Pfam" id="PF16639">
    <property type="entry name" value="Apocytochr_F_N"/>
    <property type="match status" value="1"/>
</dbReference>
<dbReference type="PRINTS" id="PR00610">
    <property type="entry name" value="CYTOCHROMEF"/>
</dbReference>
<dbReference type="SUPFAM" id="SSF103431">
    <property type="entry name" value="Cytochrome f subunit of the cytochrome b6f complex, transmembrane anchor"/>
    <property type="match status" value="1"/>
</dbReference>
<dbReference type="SUPFAM" id="SSF49441">
    <property type="entry name" value="Cytochrome f, large domain"/>
    <property type="match status" value="1"/>
</dbReference>
<dbReference type="SUPFAM" id="SSF51246">
    <property type="entry name" value="Rudiment single hybrid motif"/>
    <property type="match status" value="1"/>
</dbReference>
<dbReference type="PROSITE" id="PS51010">
    <property type="entry name" value="CYTF"/>
    <property type="match status" value="1"/>
</dbReference>
<reference key="1">
    <citation type="journal article" date="2008" name="Theor. Appl. Genet.">
        <title>The complete nucleotide sequence of the cassava (Manihot esculenta) chloroplast genome and the evolution of atpF in Malpighiales: RNA editing and multiple losses of a group II intron.</title>
        <authorList>
            <person name="Daniell H."/>
            <person name="Wurdack K.J."/>
            <person name="Kanagaraj A."/>
            <person name="Lee S.-B."/>
            <person name="Saski C."/>
            <person name="Jansen R.K."/>
        </authorList>
    </citation>
    <scope>NUCLEOTIDE SEQUENCE [LARGE SCALE GENOMIC DNA]</scope>
    <source>
        <strain>cv. TME3</strain>
    </source>
</reference>
<sequence>MQTRKTFSWIKEEITRSISVLLMIYIITWASISNAYPIFAQQGYENPREATGRIVCANCHLANKPVDIEVPQAVLPDTVFEAVVRIPYDMQLKQVLANGKKGALNVGAVLILPEGFELAPPDRISPEMKEKMGNLSFQSYRPTKKNILVIGPVPGQKYSEITFPILSPDPAAKKDVHFLKYPIYVGGNRGRGQIYPDGSKSNNTVYNATAAGIVSKIIRKEKGGYEITITDASEGRQVIDIIPPGPELLVSEGESIKLDQPLTSNPNVGGFGQGDAEIVLQDPLRVQGLLFFLASVILAQIFLVLKKKQFEKVQLSEMNF</sequence>
<geneLocation type="chloroplast"/>
<protein>
    <recommendedName>
        <fullName evidence="2">Cytochrome f</fullName>
    </recommendedName>
</protein>
<gene>
    <name evidence="2" type="primary">petA</name>
</gene>
<keyword id="KW-0150">Chloroplast</keyword>
<keyword id="KW-0249">Electron transport</keyword>
<keyword id="KW-0349">Heme</keyword>
<keyword id="KW-0408">Iron</keyword>
<keyword id="KW-0472">Membrane</keyword>
<keyword id="KW-0479">Metal-binding</keyword>
<keyword id="KW-0602">Photosynthesis</keyword>
<keyword id="KW-0934">Plastid</keyword>
<keyword id="KW-0732">Signal</keyword>
<keyword id="KW-0793">Thylakoid</keyword>
<keyword id="KW-0812">Transmembrane</keyword>
<keyword id="KW-1133">Transmembrane helix</keyword>
<keyword id="KW-0813">Transport</keyword>